<keyword id="KW-0998">Cell outer membrane</keyword>
<keyword id="KW-0186">Copper</keyword>
<keyword id="KW-0472">Membrane</keyword>
<keyword id="KW-1185">Reference proteome</keyword>
<keyword id="KW-0732">Signal</keyword>
<name>BHSA_ECOL6</name>
<accession>P0AB41</accession>
<accession>P75953</accession>
<gene>
    <name type="primary">bhsA</name>
    <name type="synonym">comC</name>
    <name type="ordered locus">c1386</name>
</gene>
<protein>
    <recommendedName>
        <fullName>Multiple stress resistance protein BhsA</fullName>
    </recommendedName>
    <alternativeName>
        <fullName>Copper-induced outer membrane component</fullName>
    </alternativeName>
</protein>
<organism>
    <name type="scientific">Escherichia coli O6:H1 (strain CFT073 / ATCC 700928 / UPEC)</name>
    <dbReference type="NCBI Taxonomy" id="199310"/>
    <lineage>
        <taxon>Bacteria</taxon>
        <taxon>Pseudomonadati</taxon>
        <taxon>Pseudomonadota</taxon>
        <taxon>Gammaproteobacteria</taxon>
        <taxon>Enterobacterales</taxon>
        <taxon>Enterobacteriaceae</taxon>
        <taxon>Escherichia</taxon>
    </lineage>
</organism>
<dbReference type="EMBL" id="AE014075">
    <property type="protein sequence ID" value="AAN79856.1"/>
    <property type="molecule type" value="Genomic_DNA"/>
</dbReference>
<dbReference type="RefSeq" id="WP_000800153.1">
    <property type="nucleotide sequence ID" value="NZ_CP051263.1"/>
</dbReference>
<dbReference type="SMR" id="P0AB41"/>
<dbReference type="STRING" id="199310.c1386"/>
<dbReference type="GeneID" id="75203698"/>
<dbReference type="KEGG" id="ecc:c1386"/>
<dbReference type="eggNOG" id="ENOG5032ZBU">
    <property type="taxonomic scope" value="Bacteria"/>
</dbReference>
<dbReference type="HOGENOM" id="CLU_158602_2_3_6"/>
<dbReference type="BioCyc" id="ECOL199310:C1386-MONOMER"/>
<dbReference type="Proteomes" id="UP000001410">
    <property type="component" value="Chromosome"/>
</dbReference>
<dbReference type="GO" id="GO:0009279">
    <property type="term" value="C:cell outer membrane"/>
    <property type="evidence" value="ECO:0007669"/>
    <property type="project" value="UniProtKB-SubCell"/>
</dbReference>
<dbReference type="FunFam" id="3.30.1660.10:FF:000001">
    <property type="entry name" value="Multiple stress resistance protein BhsA"/>
    <property type="match status" value="1"/>
</dbReference>
<dbReference type="Gene3D" id="3.30.1660.10">
    <property type="entry name" value="Flavin-binding protein dodecin"/>
    <property type="match status" value="1"/>
</dbReference>
<dbReference type="InterPro" id="IPR051096">
    <property type="entry name" value="BhsA/McbA_stress_biofilm_assoc"/>
</dbReference>
<dbReference type="InterPro" id="IPR025543">
    <property type="entry name" value="Dodecin-like"/>
</dbReference>
<dbReference type="InterPro" id="IPR036275">
    <property type="entry name" value="YdgH-like_sf"/>
</dbReference>
<dbReference type="InterPro" id="IPR010854">
    <property type="entry name" value="YdgH/BhsA/McbA-like_dom"/>
</dbReference>
<dbReference type="NCBIfam" id="NF047859">
    <property type="entry name" value="StressCuResBhsA"/>
    <property type="match status" value="1"/>
</dbReference>
<dbReference type="PANTHER" id="PTHR34156:SF10">
    <property type="entry name" value="MULTIPLE STRESS RESISTANCE PROTEIN BHSA"/>
    <property type="match status" value="1"/>
</dbReference>
<dbReference type="PANTHER" id="PTHR34156">
    <property type="entry name" value="OUTER MEMBRANE PROTEIN-RELATED-RELATED"/>
    <property type="match status" value="1"/>
</dbReference>
<dbReference type="Pfam" id="PF07338">
    <property type="entry name" value="YdgH_BhsA-like"/>
    <property type="match status" value="1"/>
</dbReference>
<dbReference type="SUPFAM" id="SSF159871">
    <property type="entry name" value="YdgH-like"/>
    <property type="match status" value="1"/>
</dbReference>
<reference key="1">
    <citation type="journal article" date="2002" name="Proc. Natl. Acad. Sci. U.S.A.">
        <title>Extensive mosaic structure revealed by the complete genome sequence of uropathogenic Escherichia coli.</title>
        <authorList>
            <person name="Welch R.A."/>
            <person name="Burland V."/>
            <person name="Plunkett G. III"/>
            <person name="Redford P."/>
            <person name="Roesch P."/>
            <person name="Rasko D."/>
            <person name="Buckles E.L."/>
            <person name="Liou S.-R."/>
            <person name="Boutin A."/>
            <person name="Hackett J."/>
            <person name="Stroud D."/>
            <person name="Mayhew G.F."/>
            <person name="Rose D.J."/>
            <person name="Zhou S."/>
            <person name="Schwartz D.C."/>
            <person name="Perna N.T."/>
            <person name="Mobley H.L.T."/>
            <person name="Donnenberg M.S."/>
            <person name="Blattner F.R."/>
        </authorList>
    </citation>
    <scope>NUCLEOTIDE SEQUENCE [LARGE SCALE GENOMIC DNA]</scope>
    <source>
        <strain>CFT073 / ATCC 700928 / UPEC</strain>
    </source>
</reference>
<sequence>MKNVKTLIAAAILSSMSFASFAAVEVQSTPEGQQKVGTISANAGTNLGSLEEQLAQKADEMGAKSFRITSVTGPNTLHGTAVIYK</sequence>
<proteinExistence type="inferred from homology"/>
<feature type="signal peptide" evidence="2">
    <location>
        <begin position="1"/>
        <end position="22"/>
    </location>
</feature>
<feature type="chain" id="PRO_0000042571" description="Multiple stress resistance protein BhsA">
    <location>
        <begin position="23"/>
        <end position="85"/>
    </location>
</feature>
<evidence type="ECO:0000250" key="1"/>
<evidence type="ECO:0000255" key="2"/>
<evidence type="ECO:0000305" key="3"/>
<comment type="function">
    <text evidence="1">Reduces the permeability of the outer membrane to copper. May be involved in the regulation of biofilm formation (By similarity).</text>
</comment>
<comment type="subcellular location">
    <subcellularLocation>
        <location evidence="1">Cell outer membrane</location>
    </subcellularLocation>
</comment>
<comment type="similarity">
    <text evidence="3">Belongs to the BhsA/McbA family.</text>
</comment>